<proteinExistence type="inferred from homology"/>
<accession>Q6CSZ5</accession>
<reference key="1">
    <citation type="journal article" date="2004" name="Nature">
        <title>Genome evolution in yeasts.</title>
        <authorList>
            <person name="Dujon B."/>
            <person name="Sherman D."/>
            <person name="Fischer G."/>
            <person name="Durrens P."/>
            <person name="Casaregola S."/>
            <person name="Lafontaine I."/>
            <person name="de Montigny J."/>
            <person name="Marck C."/>
            <person name="Neuveglise C."/>
            <person name="Talla E."/>
            <person name="Goffard N."/>
            <person name="Frangeul L."/>
            <person name="Aigle M."/>
            <person name="Anthouard V."/>
            <person name="Babour A."/>
            <person name="Barbe V."/>
            <person name="Barnay S."/>
            <person name="Blanchin S."/>
            <person name="Beckerich J.-M."/>
            <person name="Beyne E."/>
            <person name="Bleykasten C."/>
            <person name="Boisrame A."/>
            <person name="Boyer J."/>
            <person name="Cattolico L."/>
            <person name="Confanioleri F."/>
            <person name="de Daruvar A."/>
            <person name="Despons L."/>
            <person name="Fabre E."/>
            <person name="Fairhead C."/>
            <person name="Ferry-Dumazet H."/>
            <person name="Groppi A."/>
            <person name="Hantraye F."/>
            <person name="Hennequin C."/>
            <person name="Jauniaux N."/>
            <person name="Joyet P."/>
            <person name="Kachouri R."/>
            <person name="Kerrest A."/>
            <person name="Koszul R."/>
            <person name="Lemaire M."/>
            <person name="Lesur I."/>
            <person name="Ma L."/>
            <person name="Muller H."/>
            <person name="Nicaud J.-M."/>
            <person name="Nikolski M."/>
            <person name="Oztas S."/>
            <person name="Ozier-Kalogeropoulos O."/>
            <person name="Pellenz S."/>
            <person name="Potier S."/>
            <person name="Richard G.-F."/>
            <person name="Straub M.-L."/>
            <person name="Suleau A."/>
            <person name="Swennen D."/>
            <person name="Tekaia F."/>
            <person name="Wesolowski-Louvel M."/>
            <person name="Westhof E."/>
            <person name="Wirth B."/>
            <person name="Zeniou-Meyer M."/>
            <person name="Zivanovic Y."/>
            <person name="Bolotin-Fukuhara M."/>
            <person name="Thierry A."/>
            <person name="Bouchier C."/>
            <person name="Caudron B."/>
            <person name="Scarpelli C."/>
            <person name="Gaillardin C."/>
            <person name="Weissenbach J."/>
            <person name="Wincker P."/>
            <person name="Souciet J.-L."/>
        </authorList>
    </citation>
    <scope>NUCLEOTIDE SEQUENCE [LARGE SCALE GENOMIC DNA]</scope>
    <source>
        <strain>ATCC 8585 / CBS 2359 / DSM 70799 / NBRC 1267 / NRRL Y-1140 / WM37</strain>
    </source>
</reference>
<keyword id="KW-0968">Cytoplasmic vesicle</keyword>
<keyword id="KW-0256">Endoplasmic reticulum</keyword>
<keyword id="KW-0931">ER-Golgi transport</keyword>
<keyword id="KW-0472">Membrane</keyword>
<keyword id="KW-0509">mRNA transport</keyword>
<keyword id="KW-0906">Nuclear pore complex</keyword>
<keyword id="KW-0539">Nucleus</keyword>
<keyword id="KW-0653">Protein transport</keyword>
<keyword id="KW-1185">Reference proteome</keyword>
<keyword id="KW-0677">Repeat</keyword>
<keyword id="KW-0811">Translocation</keyword>
<keyword id="KW-0813">Transport</keyword>
<keyword id="KW-0853">WD repeat</keyword>
<evidence type="ECO:0000250" key="1"/>
<evidence type="ECO:0000250" key="2">
    <source>
        <dbReference type="UniProtKB" id="Q04491"/>
    </source>
</evidence>
<evidence type="ECO:0000305" key="3"/>
<sequence length="302" mass="33470">MVTINNAHSELIHDAVLDYYGKRLATCSSDHTVKIFEVEGETHKLVDTLQGHEGPVWQVDWAHPKFGVILASCSYDGKVLIWKEVNGRWSQIAAHEVHSASVNSIQWAPHEYGPLLLAASSDGKVSVVEFKENGTTSPIIIDAHSIGANTACWAPATLQQQSNQGTSGSASPQQVRRFVTGGADNLVKIWKYNSDAATYLLEHTLEGHSDWVRDVAWSPTVLSRSYLASVSQDRTCIIWTQDSKEDTWKKTLLKEDKFPDVLWRASWSLSGNILALSCGDNTVTLWKENLEGKWEPAGQVTE</sequence>
<organism>
    <name type="scientific">Kluyveromyces lactis (strain ATCC 8585 / CBS 2359 / DSM 70799 / NBRC 1267 / NRRL Y-1140 / WM37)</name>
    <name type="common">Yeast</name>
    <name type="synonym">Candida sphaerica</name>
    <dbReference type="NCBI Taxonomy" id="284590"/>
    <lineage>
        <taxon>Eukaryota</taxon>
        <taxon>Fungi</taxon>
        <taxon>Dikarya</taxon>
        <taxon>Ascomycota</taxon>
        <taxon>Saccharomycotina</taxon>
        <taxon>Saccharomycetes</taxon>
        <taxon>Saccharomycetales</taxon>
        <taxon>Saccharomycetaceae</taxon>
        <taxon>Kluyveromyces</taxon>
    </lineage>
</organism>
<dbReference type="EMBL" id="CR382123">
    <property type="protein sequence ID" value="CAH01795.1"/>
    <property type="molecule type" value="Genomic_DNA"/>
</dbReference>
<dbReference type="RefSeq" id="XP_452944.1">
    <property type="nucleotide sequence ID" value="XM_452944.1"/>
</dbReference>
<dbReference type="SMR" id="Q6CSZ5"/>
<dbReference type="FunCoup" id="Q6CSZ5">
    <property type="interactions" value="1154"/>
</dbReference>
<dbReference type="STRING" id="284590.Q6CSZ5"/>
<dbReference type="PaxDb" id="284590-Q6CSZ5"/>
<dbReference type="KEGG" id="kla:KLLA0_C16643g"/>
<dbReference type="eggNOG" id="KOG1332">
    <property type="taxonomic scope" value="Eukaryota"/>
</dbReference>
<dbReference type="HOGENOM" id="CLU_032441_0_1_1"/>
<dbReference type="InParanoid" id="Q6CSZ5"/>
<dbReference type="OMA" id="IWKEEGD"/>
<dbReference type="Proteomes" id="UP000000598">
    <property type="component" value="Chromosome C"/>
</dbReference>
<dbReference type="GO" id="GO:0030127">
    <property type="term" value="C:COPII vesicle coat"/>
    <property type="evidence" value="ECO:0007669"/>
    <property type="project" value="TreeGrafter"/>
</dbReference>
<dbReference type="GO" id="GO:0005789">
    <property type="term" value="C:endoplasmic reticulum membrane"/>
    <property type="evidence" value="ECO:0007669"/>
    <property type="project" value="UniProtKB-SubCell"/>
</dbReference>
<dbReference type="GO" id="GO:0031080">
    <property type="term" value="C:nuclear pore outer ring"/>
    <property type="evidence" value="ECO:0007669"/>
    <property type="project" value="TreeGrafter"/>
</dbReference>
<dbReference type="GO" id="GO:0005198">
    <property type="term" value="F:structural molecule activity"/>
    <property type="evidence" value="ECO:0007669"/>
    <property type="project" value="InterPro"/>
</dbReference>
<dbReference type="GO" id="GO:0090114">
    <property type="term" value="P:COPII-coated vesicle budding"/>
    <property type="evidence" value="ECO:0007669"/>
    <property type="project" value="TreeGrafter"/>
</dbReference>
<dbReference type="GO" id="GO:0051028">
    <property type="term" value="P:mRNA transport"/>
    <property type="evidence" value="ECO:0007669"/>
    <property type="project" value="UniProtKB-KW"/>
</dbReference>
<dbReference type="GO" id="GO:0032008">
    <property type="term" value="P:positive regulation of TOR signaling"/>
    <property type="evidence" value="ECO:0007669"/>
    <property type="project" value="TreeGrafter"/>
</dbReference>
<dbReference type="GO" id="GO:0032527">
    <property type="term" value="P:protein exit from endoplasmic reticulum"/>
    <property type="evidence" value="ECO:0007669"/>
    <property type="project" value="TreeGrafter"/>
</dbReference>
<dbReference type="GO" id="GO:0006606">
    <property type="term" value="P:protein import into nucleus"/>
    <property type="evidence" value="ECO:0007669"/>
    <property type="project" value="TreeGrafter"/>
</dbReference>
<dbReference type="FunFam" id="2.130.10.10:FF:000017">
    <property type="entry name" value="SEC13 homolog (S. cerevisiae)"/>
    <property type="match status" value="1"/>
</dbReference>
<dbReference type="Gene3D" id="2.130.10.10">
    <property type="entry name" value="YVTN repeat-like/Quinoprotein amine dehydrogenase"/>
    <property type="match status" value="1"/>
</dbReference>
<dbReference type="InterPro" id="IPR037363">
    <property type="entry name" value="Sec13/Seh1_fam"/>
</dbReference>
<dbReference type="InterPro" id="IPR015943">
    <property type="entry name" value="WD40/YVTN_repeat-like_dom_sf"/>
</dbReference>
<dbReference type="InterPro" id="IPR036322">
    <property type="entry name" value="WD40_repeat_dom_sf"/>
</dbReference>
<dbReference type="InterPro" id="IPR001680">
    <property type="entry name" value="WD40_rpt"/>
</dbReference>
<dbReference type="PANTHER" id="PTHR11024">
    <property type="entry name" value="NUCLEAR PORE COMPLEX PROTEIN SEC13 / SEH1 FAMILY MEMBER"/>
    <property type="match status" value="1"/>
</dbReference>
<dbReference type="PANTHER" id="PTHR11024:SF2">
    <property type="entry name" value="PROTEIN SEC13 HOMOLOG"/>
    <property type="match status" value="1"/>
</dbReference>
<dbReference type="Pfam" id="PF00400">
    <property type="entry name" value="WD40"/>
    <property type="match status" value="5"/>
</dbReference>
<dbReference type="SMART" id="SM00320">
    <property type="entry name" value="WD40"/>
    <property type="match status" value="6"/>
</dbReference>
<dbReference type="SUPFAM" id="SSF50978">
    <property type="entry name" value="WD40 repeat-like"/>
    <property type="match status" value="1"/>
</dbReference>
<dbReference type="PROSITE" id="PS50082">
    <property type="entry name" value="WD_REPEATS_2"/>
    <property type="match status" value="2"/>
</dbReference>
<dbReference type="PROSITE" id="PS50294">
    <property type="entry name" value="WD_REPEATS_REGION"/>
    <property type="match status" value="1"/>
</dbReference>
<feature type="chain" id="PRO_0000295416" description="Protein transport protein SEC13">
    <location>
        <begin position="1"/>
        <end position="302"/>
    </location>
</feature>
<feature type="repeat" description="WD 1">
    <location>
        <begin position="7"/>
        <end position="46"/>
    </location>
</feature>
<feature type="repeat" description="WD 2">
    <location>
        <begin position="51"/>
        <end position="92"/>
    </location>
</feature>
<feature type="repeat" description="WD 3">
    <location>
        <begin position="97"/>
        <end position="138"/>
    </location>
</feature>
<feature type="repeat" description="WD 4">
    <location>
        <begin position="160"/>
        <end position="200"/>
    </location>
</feature>
<feature type="repeat" description="WD 5">
    <location>
        <begin position="207"/>
        <end position="249"/>
    </location>
</feature>
<feature type="repeat" description="WD 6">
    <location>
        <begin position="257"/>
        <end position="296"/>
    </location>
</feature>
<protein>
    <recommendedName>
        <fullName>Protein transport protein SEC13</fullName>
    </recommendedName>
</protein>
<name>SEC13_KLULA</name>
<gene>
    <name type="primary">SEC13</name>
    <name type="ordered locus">KLLA0C16643g</name>
</gene>
<comment type="function">
    <text evidence="2">Component of the coat protein complex II (COPII) which promotes the formation of transport vesicles from the endoplasmic reticulum (ER). The coat has two main functions, the physical deformation of the endoplasmic reticulum membrane into vesicles and the selection of cargo molecules. It also functions as a component of the nuclear pore complex (NPC). NPC components, collectively referred to as nucleoporins (NUPs), can play the role of both NPC structural components and of docking or interaction partners for transiently associated nuclear transport factors. SEC13 is required for efficient mRNA export from the nucleus to the cytoplasm and for correct nuclear pore biogenesis and distribution (By similarity).</text>
</comment>
<comment type="subunit">
    <text evidence="2">The COPII coat is composed of at least 5 proteins: the SEC23/24 complex, the SEC13/31 complex, and the protein SAR1. Component of the nuclear pore complex (NPC). NPC constitutes the exclusive means of nucleocytoplasmic transport. NPCs allow the passive diffusion of ions and small molecules and the active, nuclear transport receptor-mediated bidirectional transport of macromolecules such as proteins, RNAs, ribonucleoparticles (RNPs), and ribosomal subunits across the nuclear envelope. Due to its 8-fold rotational symmetry, all subunits are present with 8 copies or multiples thereof.</text>
</comment>
<comment type="subcellular location">
    <subcellularLocation>
        <location evidence="1">Cytoplasmic vesicle</location>
        <location evidence="1">COPII-coated vesicle membrane</location>
        <topology evidence="1">Peripheral membrane protein</topology>
        <orientation evidence="1">Cytoplasmic side</orientation>
    </subcellularLocation>
    <subcellularLocation>
        <location evidence="1">Endoplasmic reticulum membrane</location>
        <topology evidence="1">Peripheral membrane protein</topology>
        <orientation evidence="1">Cytoplasmic side</orientation>
    </subcellularLocation>
    <subcellularLocation>
        <location evidence="2">Nucleus</location>
        <location evidence="2">Nuclear pore complex</location>
    </subcellularLocation>
</comment>
<comment type="similarity">
    <text evidence="3">Belongs to the WD repeat SEC13 family.</text>
</comment>